<dbReference type="EC" id="2.7.1.30" evidence="1"/>
<dbReference type="EMBL" id="FM178380">
    <property type="protein sequence ID" value="CAQ81139.1"/>
    <property type="molecule type" value="Genomic_DNA"/>
</dbReference>
<dbReference type="RefSeq" id="WP_012551735.1">
    <property type="nucleotide sequence ID" value="NC_011313.1"/>
</dbReference>
<dbReference type="SMR" id="B6ER09"/>
<dbReference type="KEGG" id="vsa:VSAL_II0385"/>
<dbReference type="eggNOG" id="COG0554">
    <property type="taxonomic scope" value="Bacteria"/>
</dbReference>
<dbReference type="HOGENOM" id="CLU_009281_2_3_6"/>
<dbReference type="UniPathway" id="UPA00618">
    <property type="reaction ID" value="UER00672"/>
</dbReference>
<dbReference type="Proteomes" id="UP000001730">
    <property type="component" value="Chromosome 2"/>
</dbReference>
<dbReference type="GO" id="GO:0005829">
    <property type="term" value="C:cytosol"/>
    <property type="evidence" value="ECO:0007669"/>
    <property type="project" value="TreeGrafter"/>
</dbReference>
<dbReference type="GO" id="GO:0005524">
    <property type="term" value="F:ATP binding"/>
    <property type="evidence" value="ECO:0007669"/>
    <property type="project" value="UniProtKB-UniRule"/>
</dbReference>
<dbReference type="GO" id="GO:0004370">
    <property type="term" value="F:glycerol kinase activity"/>
    <property type="evidence" value="ECO:0000250"/>
    <property type="project" value="UniProtKB"/>
</dbReference>
<dbReference type="GO" id="GO:0019563">
    <property type="term" value="P:glycerol catabolic process"/>
    <property type="evidence" value="ECO:0007669"/>
    <property type="project" value="UniProtKB-UniRule"/>
</dbReference>
<dbReference type="GO" id="GO:0006071">
    <property type="term" value="P:glycerol metabolic process"/>
    <property type="evidence" value="ECO:0000250"/>
    <property type="project" value="UniProtKB"/>
</dbReference>
<dbReference type="GO" id="GO:0006072">
    <property type="term" value="P:glycerol-3-phosphate metabolic process"/>
    <property type="evidence" value="ECO:0007669"/>
    <property type="project" value="InterPro"/>
</dbReference>
<dbReference type="CDD" id="cd07786">
    <property type="entry name" value="FGGY_EcGK_like"/>
    <property type="match status" value="1"/>
</dbReference>
<dbReference type="FunFam" id="3.30.420.40:FF:000007">
    <property type="entry name" value="Glycerol kinase"/>
    <property type="match status" value="1"/>
</dbReference>
<dbReference type="FunFam" id="3.30.420.40:FF:000008">
    <property type="entry name" value="Glycerol kinase"/>
    <property type="match status" value="1"/>
</dbReference>
<dbReference type="Gene3D" id="3.30.420.40">
    <property type="match status" value="2"/>
</dbReference>
<dbReference type="HAMAP" id="MF_00186">
    <property type="entry name" value="Glycerol_kin"/>
    <property type="match status" value="1"/>
</dbReference>
<dbReference type="InterPro" id="IPR043129">
    <property type="entry name" value="ATPase_NBD"/>
</dbReference>
<dbReference type="InterPro" id="IPR000577">
    <property type="entry name" value="Carb_kinase_FGGY"/>
</dbReference>
<dbReference type="InterPro" id="IPR018483">
    <property type="entry name" value="Carb_kinase_FGGY_CS"/>
</dbReference>
<dbReference type="InterPro" id="IPR018485">
    <property type="entry name" value="FGGY_C"/>
</dbReference>
<dbReference type="InterPro" id="IPR018484">
    <property type="entry name" value="FGGY_N"/>
</dbReference>
<dbReference type="InterPro" id="IPR005999">
    <property type="entry name" value="Glycerol_kin"/>
</dbReference>
<dbReference type="NCBIfam" id="TIGR01311">
    <property type="entry name" value="glycerol_kin"/>
    <property type="match status" value="1"/>
</dbReference>
<dbReference type="NCBIfam" id="NF000756">
    <property type="entry name" value="PRK00047.1"/>
    <property type="match status" value="1"/>
</dbReference>
<dbReference type="PANTHER" id="PTHR10196:SF69">
    <property type="entry name" value="GLYCEROL KINASE"/>
    <property type="match status" value="1"/>
</dbReference>
<dbReference type="PANTHER" id="PTHR10196">
    <property type="entry name" value="SUGAR KINASE"/>
    <property type="match status" value="1"/>
</dbReference>
<dbReference type="Pfam" id="PF02782">
    <property type="entry name" value="FGGY_C"/>
    <property type="match status" value="1"/>
</dbReference>
<dbReference type="Pfam" id="PF00370">
    <property type="entry name" value="FGGY_N"/>
    <property type="match status" value="1"/>
</dbReference>
<dbReference type="PIRSF" id="PIRSF000538">
    <property type="entry name" value="GlpK"/>
    <property type="match status" value="1"/>
</dbReference>
<dbReference type="SUPFAM" id="SSF53067">
    <property type="entry name" value="Actin-like ATPase domain"/>
    <property type="match status" value="2"/>
</dbReference>
<dbReference type="PROSITE" id="PS00933">
    <property type="entry name" value="FGGY_KINASES_1"/>
    <property type="match status" value="1"/>
</dbReference>
<dbReference type="PROSITE" id="PS00445">
    <property type="entry name" value="FGGY_KINASES_2"/>
    <property type="match status" value="1"/>
</dbReference>
<protein>
    <recommendedName>
        <fullName evidence="1">Glycerol kinase</fullName>
        <ecNumber evidence="1">2.7.1.30</ecNumber>
    </recommendedName>
    <alternativeName>
        <fullName evidence="1">ATP:glycerol 3-phosphotransferase</fullName>
    </alternativeName>
    <alternativeName>
        <fullName evidence="1">Glycerokinase</fullName>
        <shortName evidence="1">GK</shortName>
    </alternativeName>
</protein>
<evidence type="ECO:0000255" key="1">
    <source>
        <dbReference type="HAMAP-Rule" id="MF_00186"/>
    </source>
</evidence>
<name>GLPK_ALISL</name>
<proteinExistence type="inferred from homology"/>
<reference key="1">
    <citation type="journal article" date="2008" name="BMC Genomics">
        <title>The genome sequence of the fish pathogen Aliivibrio salmonicida strain LFI1238 shows extensive evidence of gene decay.</title>
        <authorList>
            <person name="Hjerde E."/>
            <person name="Lorentzen M.S."/>
            <person name="Holden M.T."/>
            <person name="Seeger K."/>
            <person name="Paulsen S."/>
            <person name="Bason N."/>
            <person name="Churcher C."/>
            <person name="Harris D."/>
            <person name="Norbertczak H."/>
            <person name="Quail M.A."/>
            <person name="Sanders S."/>
            <person name="Thurston S."/>
            <person name="Parkhill J."/>
            <person name="Willassen N.P."/>
            <person name="Thomson N.R."/>
        </authorList>
    </citation>
    <scope>NUCLEOTIDE SEQUENCE [LARGE SCALE GENOMIC DNA]</scope>
    <source>
        <strain>LFI1238</strain>
    </source>
</reference>
<keyword id="KW-0067">ATP-binding</keyword>
<keyword id="KW-0319">Glycerol metabolism</keyword>
<keyword id="KW-0418">Kinase</keyword>
<keyword id="KW-0547">Nucleotide-binding</keyword>
<keyword id="KW-0808">Transferase</keyword>
<feature type="chain" id="PRO_1000098711" description="Glycerol kinase">
    <location>
        <begin position="1"/>
        <end position="504"/>
    </location>
</feature>
<feature type="binding site" evidence="1">
    <location>
        <position position="14"/>
    </location>
    <ligand>
        <name>ADP</name>
        <dbReference type="ChEBI" id="CHEBI:456216"/>
    </ligand>
</feature>
<feature type="binding site" evidence="1">
    <location>
        <position position="14"/>
    </location>
    <ligand>
        <name>ATP</name>
        <dbReference type="ChEBI" id="CHEBI:30616"/>
    </ligand>
</feature>
<feature type="binding site" evidence="1">
    <location>
        <position position="14"/>
    </location>
    <ligand>
        <name>sn-glycerol 3-phosphate</name>
        <dbReference type="ChEBI" id="CHEBI:57597"/>
    </ligand>
</feature>
<feature type="binding site" evidence="1">
    <location>
        <position position="15"/>
    </location>
    <ligand>
        <name>ATP</name>
        <dbReference type="ChEBI" id="CHEBI:30616"/>
    </ligand>
</feature>
<feature type="binding site" evidence="1">
    <location>
        <position position="16"/>
    </location>
    <ligand>
        <name>ATP</name>
        <dbReference type="ChEBI" id="CHEBI:30616"/>
    </ligand>
</feature>
<feature type="binding site" evidence="1">
    <location>
        <position position="18"/>
    </location>
    <ligand>
        <name>ADP</name>
        <dbReference type="ChEBI" id="CHEBI:456216"/>
    </ligand>
</feature>
<feature type="binding site" evidence="1">
    <location>
        <position position="84"/>
    </location>
    <ligand>
        <name>glycerol</name>
        <dbReference type="ChEBI" id="CHEBI:17754"/>
    </ligand>
</feature>
<feature type="binding site" evidence="1">
    <location>
        <position position="84"/>
    </location>
    <ligand>
        <name>sn-glycerol 3-phosphate</name>
        <dbReference type="ChEBI" id="CHEBI:57597"/>
    </ligand>
</feature>
<feature type="binding site" evidence="1">
    <location>
        <position position="85"/>
    </location>
    <ligand>
        <name>glycerol</name>
        <dbReference type="ChEBI" id="CHEBI:17754"/>
    </ligand>
</feature>
<feature type="binding site" evidence="1">
    <location>
        <position position="85"/>
    </location>
    <ligand>
        <name>sn-glycerol 3-phosphate</name>
        <dbReference type="ChEBI" id="CHEBI:57597"/>
    </ligand>
</feature>
<feature type="binding site" evidence="1">
    <location>
        <position position="136"/>
    </location>
    <ligand>
        <name>glycerol</name>
        <dbReference type="ChEBI" id="CHEBI:17754"/>
    </ligand>
</feature>
<feature type="binding site" evidence="1">
    <location>
        <position position="136"/>
    </location>
    <ligand>
        <name>sn-glycerol 3-phosphate</name>
        <dbReference type="ChEBI" id="CHEBI:57597"/>
    </ligand>
</feature>
<feature type="binding site" evidence="1">
    <location>
        <position position="246"/>
    </location>
    <ligand>
        <name>glycerol</name>
        <dbReference type="ChEBI" id="CHEBI:17754"/>
    </ligand>
</feature>
<feature type="binding site" evidence="1">
    <location>
        <position position="246"/>
    </location>
    <ligand>
        <name>sn-glycerol 3-phosphate</name>
        <dbReference type="ChEBI" id="CHEBI:57597"/>
    </ligand>
</feature>
<feature type="binding site" evidence="1">
    <location>
        <position position="247"/>
    </location>
    <ligand>
        <name>glycerol</name>
        <dbReference type="ChEBI" id="CHEBI:17754"/>
    </ligand>
</feature>
<feature type="binding site" evidence="1">
    <location>
        <position position="268"/>
    </location>
    <ligand>
        <name>ADP</name>
        <dbReference type="ChEBI" id="CHEBI:456216"/>
    </ligand>
</feature>
<feature type="binding site" evidence="1">
    <location>
        <position position="268"/>
    </location>
    <ligand>
        <name>ATP</name>
        <dbReference type="ChEBI" id="CHEBI:30616"/>
    </ligand>
</feature>
<feature type="binding site" evidence="1">
    <location>
        <position position="311"/>
    </location>
    <ligand>
        <name>ADP</name>
        <dbReference type="ChEBI" id="CHEBI:456216"/>
    </ligand>
</feature>
<feature type="binding site" evidence="1">
    <location>
        <position position="311"/>
    </location>
    <ligand>
        <name>ATP</name>
        <dbReference type="ChEBI" id="CHEBI:30616"/>
    </ligand>
</feature>
<feature type="binding site" evidence="1">
    <location>
        <position position="315"/>
    </location>
    <ligand>
        <name>ATP</name>
        <dbReference type="ChEBI" id="CHEBI:30616"/>
    </ligand>
</feature>
<feature type="binding site" evidence="1">
    <location>
        <position position="412"/>
    </location>
    <ligand>
        <name>ADP</name>
        <dbReference type="ChEBI" id="CHEBI:456216"/>
    </ligand>
</feature>
<feature type="binding site" evidence="1">
    <location>
        <position position="412"/>
    </location>
    <ligand>
        <name>ATP</name>
        <dbReference type="ChEBI" id="CHEBI:30616"/>
    </ligand>
</feature>
<feature type="binding site" evidence="1">
    <location>
        <position position="416"/>
    </location>
    <ligand>
        <name>ADP</name>
        <dbReference type="ChEBI" id="CHEBI:456216"/>
    </ligand>
</feature>
<comment type="function">
    <text evidence="1">Key enzyme in the regulation of glycerol uptake and metabolism. Catalyzes the phosphorylation of glycerol to yield sn-glycerol 3-phosphate.</text>
</comment>
<comment type="catalytic activity">
    <reaction evidence="1">
        <text>glycerol + ATP = sn-glycerol 3-phosphate + ADP + H(+)</text>
        <dbReference type="Rhea" id="RHEA:21644"/>
        <dbReference type="ChEBI" id="CHEBI:15378"/>
        <dbReference type="ChEBI" id="CHEBI:17754"/>
        <dbReference type="ChEBI" id="CHEBI:30616"/>
        <dbReference type="ChEBI" id="CHEBI:57597"/>
        <dbReference type="ChEBI" id="CHEBI:456216"/>
        <dbReference type="EC" id="2.7.1.30"/>
    </reaction>
</comment>
<comment type="activity regulation">
    <text evidence="1">Inhibited by fructose 1,6-bisphosphate (FBP).</text>
</comment>
<comment type="pathway">
    <text evidence="1">Polyol metabolism; glycerol degradation via glycerol kinase pathway; sn-glycerol 3-phosphate from glycerol: step 1/1.</text>
</comment>
<comment type="similarity">
    <text evidence="1">Belongs to the FGGY kinase family.</text>
</comment>
<gene>
    <name evidence="1" type="primary">glpK</name>
    <name type="ordered locus">VSAL_II0385</name>
</gene>
<accession>B6ER09</accession>
<sequence length="504" mass="55321">MTEQKYIVALDQGTTSSRAVILDHDANIVSVSQREFTQIYPQAGWVEHDPLEIYATQSSTLVETLAKAGIRSDQIAAIGITNQRETTIVWNKETGKPVYNAIVWQCRRTADTCEKLKEAGLEEYIRENTGLVVDPYFSGTKIKWILDNVEGAREDAEAGKLLFGTVDTWLVWKMTQGRVHVTDYTNASRTMVFNINTLQWDEKLLKELDIPLSMMPEVKSSSEVYGETNIGGKGGTRIPIAGIAGDQQAALYGQMCVEQGQAKNTYGTGCFLLMNTGKEKVTSRNGLLTTLACGPRGEASYALEGAVFMGGASIQWLRDEMKLLADAKDSEYFATKVDSSNGVYVVPAFTGLGAPYWDAYARGTIVGLTRGCGSNHIIRATLESIAYQTRDVIDAMQADSGIKLSALRVDGGAVANNFLMQFQADVLDVAVHRPQVTEVTALGAAYLAGLAVGFWGGLDELAGKAVIDRSFEPHHDEIKRNQRYRGWKRAVKCAQSWAELHDEE</sequence>
<organism>
    <name type="scientific">Aliivibrio salmonicida (strain LFI1238)</name>
    <name type="common">Vibrio salmonicida (strain LFI1238)</name>
    <dbReference type="NCBI Taxonomy" id="316275"/>
    <lineage>
        <taxon>Bacteria</taxon>
        <taxon>Pseudomonadati</taxon>
        <taxon>Pseudomonadota</taxon>
        <taxon>Gammaproteobacteria</taxon>
        <taxon>Vibrionales</taxon>
        <taxon>Vibrionaceae</taxon>
        <taxon>Aliivibrio</taxon>
    </lineage>
</organism>